<gene>
    <name type="primary">ndrg4-a</name>
</gene>
<organism>
    <name type="scientific">Xenopus laevis</name>
    <name type="common">African clawed frog</name>
    <dbReference type="NCBI Taxonomy" id="8355"/>
    <lineage>
        <taxon>Eukaryota</taxon>
        <taxon>Metazoa</taxon>
        <taxon>Chordata</taxon>
        <taxon>Craniata</taxon>
        <taxon>Vertebrata</taxon>
        <taxon>Euteleostomi</taxon>
        <taxon>Amphibia</taxon>
        <taxon>Batrachia</taxon>
        <taxon>Anura</taxon>
        <taxon>Pipoidea</taxon>
        <taxon>Pipidae</taxon>
        <taxon>Xenopodinae</taxon>
        <taxon>Xenopus</taxon>
        <taxon>Xenopus</taxon>
    </lineage>
</organism>
<accession>Q640Z1</accession>
<accession>Q5XGS5</accession>
<sequence>MKLLGHKIELWAGLLLPDVSISGMSELRFPEEKPLLRGQDTEMESADTFLSAADTDWKEHDIETPYGMLHVVIRGTPKGNRPAILTYHDVGLNHKLCFNTFFNYEDMQEITKHFVVCHVDAPGQQVGASQFPQGYQYPTMDQLAAMLPSVMQHFGFQSIIAIGVGAGAYVLAKFALIFPELVEGMVLINIDPNGKGWIDWAASKISGLASSLPETVLSHLFSQEELMNNTELVQNYRQQISNCVNQSNLQLFWNMYNSRRDLEMSRPGTAPNAKTLRAPVMLVVGDNAPAEECVVECNSKLDPTNTTFLKMADSGGLPQVTQPGKLTEAFKYFLQGMGYMPSASMTRLARSRTASLTSASSVDGSRPRPCTQSESSDGIGQINHTMEVSC</sequence>
<reference evidence="5 6" key="1">
    <citation type="submission" date="2004-10" db="EMBL/GenBank/DDBJ databases">
        <authorList>
            <consortium name="NIH - Xenopus Gene Collection (XGC) project"/>
        </authorList>
    </citation>
    <scope>NUCLEOTIDE SEQUENCE [LARGE SCALE MRNA] (ISOFORMS 1 AND 2)</scope>
    <source>
        <tissue evidence="6">Eye</tissue>
    </source>
</reference>
<comment type="function">
    <text evidence="1">Contributes to the maintenance of intracerebral BDNF levels within the normal range. May enhance growth factor-induced ERK1 and ERK2 phosphorylation. May attenuate growth factor-promoted ELK1 phosphorylation in a microtubule-dependent manner (By similarity).</text>
</comment>
<comment type="subcellular location">
    <subcellularLocation>
        <location evidence="1">Cytoplasm</location>
        <location evidence="1">Cytosol</location>
    </subcellularLocation>
</comment>
<comment type="alternative products">
    <event type="alternative splicing"/>
    <isoform>
        <id>Q640Z1-1</id>
        <name>1</name>
        <sequence type="displayed"/>
    </isoform>
    <isoform>
        <id>Q640Z1-2</id>
        <name>2</name>
        <sequence type="described" ref="VSP_051978"/>
    </isoform>
</comment>
<comment type="similarity">
    <text evidence="2">Belongs to the NDRG family.</text>
</comment>
<comment type="sequence caution" evidence="5">
    <conflict type="erroneous initiation">
        <sequence resource="EMBL-CDS" id="AAH84357"/>
    </conflict>
    <text>Extended N-terminus.</text>
</comment>
<dbReference type="EMBL" id="BC082448">
    <property type="protein sequence ID" value="AAH82448.1"/>
    <property type="molecule type" value="mRNA"/>
</dbReference>
<dbReference type="EMBL" id="BC084357">
    <property type="protein sequence ID" value="AAH84357.1"/>
    <property type="status" value="ALT_INIT"/>
    <property type="molecule type" value="mRNA"/>
</dbReference>
<dbReference type="RefSeq" id="NP_001087900.1">
    <molecule id="Q640Z1-1"/>
    <property type="nucleotide sequence ID" value="NM_001094431.1"/>
</dbReference>
<dbReference type="RefSeq" id="XP_018115154.1">
    <molecule id="Q640Z1-2"/>
    <property type="nucleotide sequence ID" value="XM_018259665.1"/>
</dbReference>
<dbReference type="SMR" id="Q640Z1"/>
<dbReference type="ESTHER" id="xenla-ndr4a">
    <property type="family name" value="Ndr_family"/>
</dbReference>
<dbReference type="MEROPS" id="S33.986"/>
<dbReference type="DNASU" id="447761"/>
<dbReference type="GeneID" id="447761"/>
<dbReference type="KEGG" id="xla:447761"/>
<dbReference type="AGR" id="Xenbase:XB-GENE-941133"/>
<dbReference type="CTD" id="447761"/>
<dbReference type="Xenbase" id="XB-GENE-941133">
    <property type="gene designation" value="ndrg4.S"/>
</dbReference>
<dbReference type="OMA" id="VDTDWKX"/>
<dbReference type="OrthoDB" id="191979at2759"/>
<dbReference type="Proteomes" id="UP000186698">
    <property type="component" value="Chromosome 4S"/>
</dbReference>
<dbReference type="Bgee" id="447761">
    <property type="expression patterns" value="Expressed in brain and 13 other cell types or tissues"/>
</dbReference>
<dbReference type="GO" id="GO:0005737">
    <property type="term" value="C:cytoplasm"/>
    <property type="evidence" value="ECO:0000318"/>
    <property type="project" value="GO_Central"/>
</dbReference>
<dbReference type="GO" id="GO:0005829">
    <property type="term" value="C:cytosol"/>
    <property type="evidence" value="ECO:0007669"/>
    <property type="project" value="UniProtKB-SubCell"/>
</dbReference>
<dbReference type="GO" id="GO:0070374">
    <property type="term" value="P:positive regulation of ERK1 and ERK2 cascade"/>
    <property type="evidence" value="ECO:0000318"/>
    <property type="project" value="GO_Central"/>
</dbReference>
<dbReference type="GO" id="GO:0007165">
    <property type="term" value="P:signal transduction"/>
    <property type="evidence" value="ECO:0000318"/>
    <property type="project" value="GO_Central"/>
</dbReference>
<dbReference type="FunFam" id="3.40.50.1820:FF:000009">
    <property type="entry name" value="NDRG family member 4"/>
    <property type="match status" value="1"/>
</dbReference>
<dbReference type="Gene3D" id="3.40.50.1820">
    <property type="entry name" value="alpha/beta hydrolase"/>
    <property type="match status" value="1"/>
</dbReference>
<dbReference type="InterPro" id="IPR029058">
    <property type="entry name" value="AB_hydrolase_fold"/>
</dbReference>
<dbReference type="InterPro" id="IPR004142">
    <property type="entry name" value="NDRG"/>
</dbReference>
<dbReference type="PANTHER" id="PTHR11034">
    <property type="entry name" value="N-MYC DOWNSTREAM REGULATED"/>
    <property type="match status" value="1"/>
</dbReference>
<dbReference type="Pfam" id="PF03096">
    <property type="entry name" value="Ndr"/>
    <property type="match status" value="1"/>
</dbReference>
<dbReference type="SUPFAM" id="SSF53474">
    <property type="entry name" value="alpha/beta-Hydrolases"/>
    <property type="match status" value="1"/>
</dbReference>
<proteinExistence type="evidence at transcript level"/>
<name>NDR4A_XENLA</name>
<keyword id="KW-0025">Alternative splicing</keyword>
<keyword id="KW-0963">Cytoplasm</keyword>
<keyword id="KW-1185">Reference proteome</keyword>
<feature type="chain" id="PRO_0000232432" description="Protein NDRG4-A">
    <location>
        <begin position="1"/>
        <end position="390"/>
    </location>
</feature>
<feature type="region of interest" description="Disordered" evidence="3">
    <location>
        <begin position="356"/>
        <end position="390"/>
    </location>
</feature>
<feature type="compositionally biased region" description="Polar residues" evidence="3">
    <location>
        <begin position="370"/>
        <end position="390"/>
    </location>
</feature>
<feature type="splice variant" id="VSP_051978" description="In isoform 2." evidence="4">
    <location>
        <begin position="1"/>
        <end position="23"/>
    </location>
</feature>
<evidence type="ECO:0000250" key="1"/>
<evidence type="ECO:0000255" key="2"/>
<evidence type="ECO:0000256" key="3">
    <source>
        <dbReference type="SAM" id="MobiDB-lite"/>
    </source>
</evidence>
<evidence type="ECO:0000303" key="4">
    <source ref="1"/>
</evidence>
<evidence type="ECO:0000305" key="5"/>
<evidence type="ECO:0000312" key="6">
    <source>
        <dbReference type="EMBL" id="AAH84357.1"/>
    </source>
</evidence>
<protein>
    <recommendedName>
        <fullName>Protein NDRG4-A</fullName>
    </recommendedName>
</protein>